<reference key="1">
    <citation type="journal article" date="1994" name="J. Biol. Chem.">
        <title>Cloning and functional expression of endothelin-converting enzyme from rat endothelial cells.</title>
        <authorList>
            <person name="Shimada K."/>
            <person name="Takahashi M."/>
            <person name="Tanzawa K."/>
        </authorList>
    </citation>
    <scope>NUCLEOTIDE SEQUENCE [MRNA] (ISOFORM C)</scope>
    <source>
        <tissue>Endothelial cell</tissue>
    </source>
</reference>
<reference key="2">
    <citation type="journal article" date="1999" name="Eur. J. Biochem.">
        <title>A fourth isoform of endothelin-converting enzyme (ECE-1) is generated from an additional promoter.</title>
        <authorList>
            <person name="Valdenaire O."/>
            <person name="Lepailleur-Enouf D."/>
            <person name="Egidy G."/>
            <person name="Thouard A."/>
            <person name="Barret A."/>
            <person name="Vranckx R."/>
            <person name="Tougard C."/>
            <person name="Michel J.-B."/>
        </authorList>
    </citation>
    <scope>NUCLEOTIDE SEQUENCE [MRNA] OF 1-116</scope>
    <scope>ALTERNATIVE SPLICING</scope>
    <scope>SUBCELLULAR LOCATION</scope>
    <scope>TISSUE SPECIFICITY</scope>
    <source>
        <tissue>Smooth muscle</tissue>
    </source>
</reference>
<reference key="3">
    <citation type="journal article" date="1995" name="FEBS Lett.">
        <title>Identification and characterization of two isoforms of an endothelin-converting enzyme-1.</title>
        <authorList>
            <person name="Shimada K."/>
            <person name="Takahashi M."/>
            <person name="Ikeda M."/>
            <person name="Tanzawa K."/>
        </authorList>
    </citation>
    <scope>NUCLEOTIDE SEQUENCE [MRNA] OF 1-109 (ISOFORM A)</scope>
    <source>
        <strain>Sprague-Dawley</strain>
        <tissue>Lung</tissue>
    </source>
</reference>
<reference key="4">
    <citation type="journal article" date="1996" name="Biochem. J.">
        <title>Rat endothelin-converting enzyme-1 forms a dimer through Cys412 with a similar catalytic mechanism and a distinct substrate binding mechanism compared with neutral endopeptidase-24.11.</title>
        <authorList>
            <person name="Shimada K."/>
            <person name="Takahashi M."/>
            <person name="Turner A.J."/>
            <person name="Tanzawa K."/>
        </authorList>
    </citation>
    <scope>SUBUNIT</scope>
    <scope>SUBCELLULAR LOCATION</scope>
    <scope>MUTAGENESIS OF CYS-420; GLU-600; GLU-659 AND HIS-724</scope>
</reference>
<reference key="5">
    <citation type="journal article" date="2012" name="Nat. Commun.">
        <title>Quantitative maps of protein phosphorylation sites across 14 different rat organs and tissues.</title>
        <authorList>
            <person name="Lundby A."/>
            <person name="Secher A."/>
            <person name="Lage K."/>
            <person name="Nordsborg N.B."/>
            <person name="Dmytriyev A."/>
            <person name="Lundby C."/>
            <person name="Olsen J.V."/>
        </authorList>
    </citation>
    <scope>IDENTIFICATION BY MASS SPECTROMETRY [LARGE SCALE ANALYSIS]</scope>
</reference>
<protein>
    <recommendedName>
        <fullName>Endothelin-converting enzyme 1</fullName>
        <shortName>ECE-1</shortName>
        <ecNumber>3.4.24.71</ecNumber>
    </recommendedName>
</protein>
<organism>
    <name type="scientific">Rattus norvegicus</name>
    <name type="common">Rat</name>
    <dbReference type="NCBI Taxonomy" id="10116"/>
    <lineage>
        <taxon>Eukaryota</taxon>
        <taxon>Metazoa</taxon>
        <taxon>Chordata</taxon>
        <taxon>Craniata</taxon>
        <taxon>Vertebrata</taxon>
        <taxon>Euteleostomi</taxon>
        <taxon>Mammalia</taxon>
        <taxon>Eutheria</taxon>
        <taxon>Euarchontoglires</taxon>
        <taxon>Glires</taxon>
        <taxon>Rodentia</taxon>
        <taxon>Myomorpha</taxon>
        <taxon>Muroidea</taxon>
        <taxon>Muridae</taxon>
        <taxon>Murinae</taxon>
        <taxon>Rattus</taxon>
    </lineage>
</organism>
<feature type="chain" id="PRO_0000078221" description="Endothelin-converting enzyme 1">
    <location>
        <begin position="1"/>
        <end position="762"/>
    </location>
</feature>
<feature type="topological domain" description="Cytoplasmic" evidence="3">
    <location>
        <begin position="1"/>
        <end position="60"/>
    </location>
</feature>
<feature type="transmembrane region" description="Helical; Signal-anchor for type II membrane protein" evidence="3">
    <location>
        <begin position="61"/>
        <end position="81"/>
    </location>
</feature>
<feature type="topological domain" description="Extracellular" evidence="3">
    <location>
        <begin position="82"/>
        <end position="762"/>
    </location>
</feature>
<feature type="domain" description="Peptidase M13" evidence="4">
    <location>
        <begin position="90"/>
        <end position="762"/>
    </location>
</feature>
<feature type="active site" evidence="4 5">
    <location>
        <position position="600"/>
    </location>
</feature>
<feature type="active site" description="Proton donor" evidence="4">
    <location>
        <position position="663"/>
    </location>
</feature>
<feature type="binding site" evidence="4 5">
    <location>
        <position position="599"/>
    </location>
    <ligand>
        <name>Zn(2+)</name>
        <dbReference type="ChEBI" id="CHEBI:29105"/>
        <note>catalytic</note>
    </ligand>
</feature>
<feature type="binding site" evidence="4 5">
    <location>
        <position position="603"/>
    </location>
    <ligand>
        <name>Zn(2+)</name>
        <dbReference type="ChEBI" id="CHEBI:29105"/>
        <note>catalytic</note>
    </ligand>
</feature>
<feature type="binding site" evidence="4">
    <location>
        <position position="659"/>
    </location>
    <ligand>
        <name>Zn(2+)</name>
        <dbReference type="ChEBI" id="CHEBI:29105"/>
        <note>catalytic</note>
    </ligand>
</feature>
<feature type="glycosylation site" description="N-linked (GlcNAc...) asparagine" evidence="3">
    <location>
        <position position="158"/>
    </location>
</feature>
<feature type="glycosylation site" description="N-linked (GlcNAc...) asparagine" evidence="3">
    <location>
        <position position="179"/>
    </location>
</feature>
<feature type="glycosylation site" description="N-linked (GlcNAc...) asparagine" evidence="3">
    <location>
        <position position="202"/>
    </location>
</feature>
<feature type="glycosylation site" description="N-linked (GlcNAc...) asparagine" evidence="3">
    <location>
        <position position="262"/>
    </location>
</feature>
<feature type="glycosylation site" description="N-linked (GlcNAc...) asparagine" evidence="3">
    <location>
        <position position="308"/>
    </location>
</feature>
<feature type="glycosylation site" description="N-linked (GlcNAc...) asparagine" evidence="3">
    <location>
        <position position="354"/>
    </location>
</feature>
<feature type="glycosylation site" description="N-linked (GlcNAc...) asparagine" evidence="3">
    <location>
        <position position="375"/>
    </location>
</feature>
<feature type="glycosylation site" description="N-linked (GlcNAc...) asparagine" evidence="3">
    <location>
        <position position="531"/>
    </location>
</feature>
<feature type="glycosylation site" description="N-linked (GlcNAc...) asparagine" evidence="3">
    <location>
        <position position="624"/>
    </location>
</feature>
<feature type="glycosylation site" description="N-linked (GlcNAc...) asparagine" evidence="3">
    <location>
        <position position="643"/>
    </location>
</feature>
<feature type="disulfide bond" evidence="4">
    <location>
        <begin position="91"/>
        <end position="96"/>
    </location>
</feature>
<feature type="disulfide bond" evidence="4">
    <location>
        <begin position="114"/>
        <end position="747"/>
    </location>
</feature>
<feature type="disulfide bond" evidence="4">
    <location>
        <begin position="122"/>
        <end position="707"/>
    </location>
</feature>
<feature type="disulfide bond" evidence="4">
    <location>
        <begin position="177"/>
        <end position="427"/>
    </location>
</feature>
<feature type="disulfide bond" evidence="4">
    <location>
        <begin position="636"/>
        <end position="759"/>
    </location>
</feature>
<feature type="splice variant" id="VSP_005505" description="In isoform B." evidence="9">
    <original>MGSLRPPQGLGLQWSSFFLGKKGPGLTVSLPLLASS</original>
    <variation>MRTVWPPLRAALAALGMSSYKRATLDEEDLVDSLSEGDVYPNG</variation>
    <location>
        <begin position="1"/>
        <end position="36"/>
    </location>
</feature>
<feature type="splice variant" id="VSP_005506" description="In isoform C." evidence="8">
    <original>MGSLRPPQGLGLQWSSFFLGKKGPGLTVSLPLLASS</original>
    <variation>MMSSYKRATLDEEDLVDSLSEGDVYPNG</variation>
    <location>
        <begin position="1"/>
        <end position="36"/>
    </location>
</feature>
<feature type="splice variant" id="VSP_005507" description="In isoform D." evidence="9">
    <original>MGSLRPPQGLGLQWSSFFLGKKGPGLTVSLPLLASS</original>
    <variation>METLRESVLHLALQMSSYKRATLDEEDLVDSLSEGDVYPNG</variation>
    <location>
        <begin position="1"/>
        <end position="36"/>
    </location>
</feature>
<feature type="mutagenesis site" description="Loss of dimerization." evidence="7">
    <original>C</original>
    <variation>S</variation>
    <location>
        <position position="420"/>
    </location>
</feature>
<feature type="mutagenesis site" description="Loss of activity." evidence="7">
    <original>E</original>
    <variation>Q</variation>
    <location>
        <position position="600"/>
    </location>
</feature>
<feature type="mutagenesis site" description="Loss of activity." evidence="7">
    <original>E</original>
    <variation>Q</variation>
    <location>
        <position position="659"/>
    </location>
</feature>
<feature type="mutagenesis site" description="Loss of activity." evidence="7">
    <original>H</original>
    <variation>Q</variation>
    <location>
        <position position="724"/>
    </location>
</feature>
<proteinExistence type="evidence at protein level"/>
<evidence type="ECO:0000250" key="1"/>
<evidence type="ECO:0000250" key="2">
    <source>
        <dbReference type="UniProtKB" id="P42891"/>
    </source>
</evidence>
<evidence type="ECO:0000255" key="3"/>
<evidence type="ECO:0000255" key="4">
    <source>
        <dbReference type="PROSITE-ProRule" id="PRU01233"/>
    </source>
</evidence>
<evidence type="ECO:0000255" key="5">
    <source>
        <dbReference type="PROSITE-ProRule" id="PRU10095"/>
    </source>
</evidence>
<evidence type="ECO:0000269" key="6">
    <source>
    </source>
</evidence>
<evidence type="ECO:0000269" key="7">
    <source>
    </source>
</evidence>
<evidence type="ECO:0000303" key="8">
    <source>
    </source>
</evidence>
<evidence type="ECO:0000305" key="9"/>
<comment type="function">
    <text>Converts big endothelin-1 to endothelin-1.</text>
</comment>
<comment type="catalytic activity">
    <reaction>
        <text>Hydrolysis of the 21-Trp-|-Val-22 bond in big endothelin to form endothelin 1.</text>
        <dbReference type="EC" id="3.4.24.71"/>
    </reaction>
</comment>
<comment type="cofactor">
    <cofactor evidence="1">
        <name>Zn(2+)</name>
        <dbReference type="ChEBI" id="CHEBI:29105"/>
    </cofactor>
    <text evidence="1">Binds 1 zinc ion per subunit.</text>
</comment>
<comment type="activity regulation">
    <text evidence="1">Inhibited by phosphoramidon.</text>
</comment>
<comment type="subunit">
    <text evidence="2 7">Homodimer; disulfide-linked (PubMed:8645169). Interacts with PPP1R16B (By similarity). Interacts with TSPAN8; this interaction recruits the endothelin converting enzyme ECE1 to tetraspanin-enriched microdomains and positively modulates its enzymatic activity (By similarity).</text>
</comment>
<comment type="subcellular location">
    <subcellularLocation>
        <location evidence="6 7">Cell membrane</location>
        <topology evidence="6 7">Single-pass type II membrane protein</topology>
    </subcellularLocation>
</comment>
<comment type="alternative products">
    <event type="alternative splicing"/>
    <isoform>
        <id>P42893-1</id>
        <name>A</name>
        <sequence type="displayed"/>
    </isoform>
    <isoform>
        <id>P42893-2</id>
        <name>B</name>
        <sequence type="described" ref="VSP_005505"/>
    </isoform>
    <isoform>
        <id>P42893-3</id>
        <name>C</name>
        <sequence type="described" ref="VSP_005506"/>
    </isoform>
    <isoform>
        <id>P42893-4</id>
        <name>D</name>
        <sequence type="described" ref="VSP_005507"/>
    </isoform>
</comment>
<comment type="tissue specificity">
    <text evidence="6">All isoforms are expressed in aortic endothelial cells. Isoform A is also expressed in liver; isoform B in smooth muscle cells and fibroblasts; isoform C in aortic endothelial cells, smooth muscle cells, fibroblasts, liver and lung, and isoform D in smooth muscle cells.</text>
</comment>
<comment type="similarity">
    <text evidence="4 9">Belongs to the peptidase M13 family.</text>
</comment>
<sequence length="762" mass="86126">MGSLRPPQGLGLQWSSFFLGKKGPGLTVSLPLLASSLQVNFRSPRSGQRCWAARTSVEKRLVVLVTLLAAGLVACLAALGIQYRTRTPPVCLTEACVSVTSSILNSMDPTVDPCQDFFSYACGGWIKANPVPDGHSRWGTFSNLWEHNQAIIKHLLENSTASASEAEKKAQVYYRACMNETRIEELRAKPLMELIEKLGGWNITGPWAKDNFQDTLQVVTAHYRTSPFFSVYVSADSKNSNSNVIQVDQSGLGLPSRDYYLNKTENEKVLTGYLNYMVQLGKLLGGGDEDSIRPQMQQILDFETALANITIPQEKRRDEELIYHKVTAAELQTLAPAINWLPFLNAIFYPVEINESEPIVVYDKEYLRQVSTLINSTDKCLLNNYMMWNLVRKTSSFLDQRFQDADEKFMEVMYGTKKTCLPRWKFCVSDTENNLGFALGPMFVKATFAEDSKNIASEIILEIKKAFEESLSTLKWMDEDTRRSAKEKADAIYNMIGYPNFIMDPKELDKVFNDYTAVPDLYFENAMRFFNFSLRVTADQLRKAPNRDQWSMTPPMVNAYYSPTKNEIVFPAGILQAPFYTRSSPNALNFGGIGVVVGHELTHAFDDQGREYDKDGNLRPWWKNSSVEAFKQQTECMVQQYNNYSVNGEPVNGRHTLGENIADNGGLKAAYRAYQNWVKKNGAEQILPTLGLTSNQLFFLGFAQVWCSVRTPESSHEGLITDPHSPSRFRVIGSLSNSKEFSEHFRCPLGSPMNPRHKCEVW</sequence>
<gene>
    <name type="primary">Ece1</name>
</gene>
<accession>P42893</accession>
<accession>Q9WUY8</accession>
<accession>Q9WUY9</accession>
<dbReference type="EC" id="3.4.24.71"/>
<dbReference type="EMBL" id="D29683">
    <property type="protein sequence ID" value="BAA06152.1"/>
    <property type="molecule type" value="mRNA"/>
</dbReference>
<dbReference type="EMBL" id="AJ130826">
    <property type="protein sequence ID" value="CAB46528.1"/>
    <property type="molecule type" value="mRNA"/>
</dbReference>
<dbReference type="EMBL" id="AJ130827">
    <property type="protein sequence ID" value="CAB46529.1"/>
    <property type="molecule type" value="mRNA"/>
</dbReference>
<dbReference type="EMBL" id="D63795">
    <property type="protein sequence ID" value="BAA09864.1"/>
    <property type="molecule type" value="mRNA"/>
</dbReference>
<dbReference type="PIR" id="A53679">
    <property type="entry name" value="A53679"/>
</dbReference>
<dbReference type="PIR" id="S66530">
    <property type="entry name" value="S66530"/>
</dbReference>
<dbReference type="SMR" id="P42893"/>
<dbReference type="FunCoup" id="P42893">
    <property type="interactions" value="435"/>
</dbReference>
<dbReference type="STRING" id="10116.ENSRNOP00000062928"/>
<dbReference type="BindingDB" id="P42893"/>
<dbReference type="ChEMBL" id="CHEMBL2676"/>
<dbReference type="GuidetoPHARMACOLOGY" id="1615"/>
<dbReference type="MEROPS" id="M13.002"/>
<dbReference type="GlyCosmos" id="P42893">
    <property type="glycosylation" value="10 sites, No reported glycans"/>
</dbReference>
<dbReference type="GlyGen" id="P42893">
    <property type="glycosylation" value="10 sites"/>
</dbReference>
<dbReference type="PhosphoSitePlus" id="P42893"/>
<dbReference type="SwissPalm" id="P42893"/>
<dbReference type="PaxDb" id="10116-ENSRNOP00000062928"/>
<dbReference type="AGR" id="RGD:620293"/>
<dbReference type="RGD" id="620293">
    <property type="gene designation" value="Ece1"/>
</dbReference>
<dbReference type="eggNOG" id="KOG3624">
    <property type="taxonomic scope" value="Eukaryota"/>
</dbReference>
<dbReference type="InParanoid" id="P42893"/>
<dbReference type="OrthoDB" id="6475849at2759"/>
<dbReference type="PhylomeDB" id="P42893"/>
<dbReference type="BRENDA" id="3.4.24.71">
    <property type="organism ID" value="5301"/>
</dbReference>
<dbReference type="Reactome" id="R-RNO-375276">
    <property type="pathway name" value="Peptide ligand-binding receptors"/>
</dbReference>
<dbReference type="PRO" id="PR:P42893"/>
<dbReference type="Proteomes" id="UP000002494">
    <property type="component" value="Unplaced"/>
</dbReference>
<dbReference type="GO" id="GO:0005769">
    <property type="term" value="C:early endosome"/>
    <property type="evidence" value="ECO:0000314"/>
    <property type="project" value="RGD"/>
</dbReference>
<dbReference type="GO" id="GO:0005768">
    <property type="term" value="C:endosome"/>
    <property type="evidence" value="ECO:0000266"/>
    <property type="project" value="RGD"/>
</dbReference>
<dbReference type="GO" id="GO:0009897">
    <property type="term" value="C:external side of plasma membrane"/>
    <property type="evidence" value="ECO:0000314"/>
    <property type="project" value="BHF-UCL"/>
</dbReference>
<dbReference type="GO" id="GO:0016020">
    <property type="term" value="C:membrane"/>
    <property type="evidence" value="ECO:0000266"/>
    <property type="project" value="RGD"/>
</dbReference>
<dbReference type="GO" id="GO:0048471">
    <property type="term" value="C:perinuclear region of cytoplasm"/>
    <property type="evidence" value="ECO:0000266"/>
    <property type="project" value="RGD"/>
</dbReference>
<dbReference type="GO" id="GO:0005886">
    <property type="term" value="C:plasma membrane"/>
    <property type="evidence" value="ECO:0000266"/>
    <property type="project" value="RGD"/>
</dbReference>
<dbReference type="GO" id="GO:0030141">
    <property type="term" value="C:secretory granule"/>
    <property type="evidence" value="ECO:0000314"/>
    <property type="project" value="RGD"/>
</dbReference>
<dbReference type="GO" id="GO:0031982">
    <property type="term" value="C:vesicle"/>
    <property type="evidence" value="ECO:0000314"/>
    <property type="project" value="BHF-UCL"/>
</dbReference>
<dbReference type="GO" id="GO:0033093">
    <property type="term" value="C:Weibel-Palade body"/>
    <property type="evidence" value="ECO:0000266"/>
    <property type="project" value="RGD"/>
</dbReference>
<dbReference type="GO" id="GO:0004175">
    <property type="term" value="F:endopeptidase activity"/>
    <property type="evidence" value="ECO:0000266"/>
    <property type="project" value="RGD"/>
</dbReference>
<dbReference type="GO" id="GO:0042802">
    <property type="term" value="F:identical protein binding"/>
    <property type="evidence" value="ECO:0000315"/>
    <property type="project" value="RGD"/>
</dbReference>
<dbReference type="GO" id="GO:0004222">
    <property type="term" value="F:metalloendopeptidase activity"/>
    <property type="evidence" value="ECO:0000318"/>
    <property type="project" value="GO_Central"/>
</dbReference>
<dbReference type="GO" id="GO:0042803">
    <property type="term" value="F:protein homodimerization activity"/>
    <property type="evidence" value="ECO:0000266"/>
    <property type="project" value="RGD"/>
</dbReference>
<dbReference type="GO" id="GO:0008270">
    <property type="term" value="F:zinc ion binding"/>
    <property type="evidence" value="ECO:0000266"/>
    <property type="project" value="RGD"/>
</dbReference>
<dbReference type="GO" id="GO:0007411">
    <property type="term" value="P:axon guidance"/>
    <property type="evidence" value="ECO:0000266"/>
    <property type="project" value="RGD"/>
</dbReference>
<dbReference type="GO" id="GO:0060385">
    <property type="term" value="P:axonogenesis involved in innervation"/>
    <property type="evidence" value="ECO:0000266"/>
    <property type="project" value="RGD"/>
</dbReference>
<dbReference type="GO" id="GO:0097746">
    <property type="term" value="P:blood vessel diameter maintenance"/>
    <property type="evidence" value="ECO:0000315"/>
    <property type="project" value="RGD"/>
</dbReference>
<dbReference type="GO" id="GO:0010815">
    <property type="term" value="P:bradykinin catabolic process"/>
    <property type="evidence" value="ECO:0000266"/>
    <property type="project" value="RGD"/>
</dbReference>
<dbReference type="GO" id="GO:0010816">
    <property type="term" value="P:calcitonin catabolic process"/>
    <property type="evidence" value="ECO:0000266"/>
    <property type="project" value="RGD"/>
</dbReference>
<dbReference type="GO" id="GO:0043583">
    <property type="term" value="P:ear development"/>
    <property type="evidence" value="ECO:0000266"/>
    <property type="project" value="RGD"/>
</dbReference>
<dbReference type="GO" id="GO:0042733">
    <property type="term" value="P:embryonic digit morphogenesis"/>
    <property type="evidence" value="ECO:0000266"/>
    <property type="project" value="RGD"/>
</dbReference>
<dbReference type="GO" id="GO:0035050">
    <property type="term" value="P:embryonic heart tube development"/>
    <property type="evidence" value="ECO:0000266"/>
    <property type="project" value="RGD"/>
</dbReference>
<dbReference type="GO" id="GO:0034959">
    <property type="term" value="P:endothelin maturation"/>
    <property type="evidence" value="ECO:0000266"/>
    <property type="project" value="RGD"/>
</dbReference>
<dbReference type="GO" id="GO:0010467">
    <property type="term" value="P:gene expression"/>
    <property type="evidence" value="ECO:0000266"/>
    <property type="project" value="RGD"/>
</dbReference>
<dbReference type="GO" id="GO:0007507">
    <property type="term" value="P:heart development"/>
    <property type="evidence" value="ECO:0000266"/>
    <property type="project" value="RGD"/>
</dbReference>
<dbReference type="GO" id="GO:0042447">
    <property type="term" value="P:hormone catabolic process"/>
    <property type="evidence" value="ECO:0000266"/>
    <property type="project" value="RGD"/>
</dbReference>
<dbReference type="GO" id="GO:0031175">
    <property type="term" value="P:neuron projection development"/>
    <property type="evidence" value="ECO:0000266"/>
    <property type="project" value="RGD"/>
</dbReference>
<dbReference type="GO" id="GO:0016486">
    <property type="term" value="P:peptide hormone processing"/>
    <property type="evidence" value="ECO:0000266"/>
    <property type="project" value="RGD"/>
</dbReference>
<dbReference type="GO" id="GO:0060037">
    <property type="term" value="P:pharyngeal system development"/>
    <property type="evidence" value="ECO:0000266"/>
    <property type="project" value="RGD"/>
</dbReference>
<dbReference type="GO" id="GO:0141163">
    <property type="term" value="P:positive regulation of cAMP/PKA signal transduction"/>
    <property type="evidence" value="ECO:0000315"/>
    <property type="project" value="RGD"/>
</dbReference>
<dbReference type="GO" id="GO:0010613">
    <property type="term" value="P:positive regulation of cardiac muscle hypertrophy"/>
    <property type="evidence" value="ECO:0000315"/>
    <property type="project" value="RGD"/>
</dbReference>
<dbReference type="GO" id="GO:0045745">
    <property type="term" value="P:positive regulation of G protein-coupled receptor signaling pathway"/>
    <property type="evidence" value="ECO:0000315"/>
    <property type="project" value="RGD"/>
</dbReference>
<dbReference type="GO" id="GO:0001921">
    <property type="term" value="P:positive regulation of receptor recycling"/>
    <property type="evidence" value="ECO:0000315"/>
    <property type="project" value="RGD"/>
</dbReference>
<dbReference type="GO" id="GO:0016485">
    <property type="term" value="P:protein processing"/>
    <property type="evidence" value="ECO:0000314"/>
    <property type="project" value="RGD"/>
</dbReference>
<dbReference type="GO" id="GO:0008217">
    <property type="term" value="P:regulation of blood pressure"/>
    <property type="evidence" value="ECO:0000315"/>
    <property type="project" value="RGD"/>
</dbReference>
<dbReference type="GO" id="GO:0070372">
    <property type="term" value="P:regulation of ERK1 and ERK2 cascade"/>
    <property type="evidence" value="ECO:0000315"/>
    <property type="project" value="RGD"/>
</dbReference>
<dbReference type="GO" id="GO:0046686">
    <property type="term" value="P:response to cadmium ion"/>
    <property type="evidence" value="ECO:0000270"/>
    <property type="project" value="RGD"/>
</dbReference>
<dbReference type="GO" id="GO:0001666">
    <property type="term" value="P:response to hypoxia"/>
    <property type="evidence" value="ECO:0000314"/>
    <property type="project" value="RGD"/>
</dbReference>
<dbReference type="GO" id="GO:0035994">
    <property type="term" value="P:response to muscle stretch"/>
    <property type="evidence" value="ECO:0000270"/>
    <property type="project" value="RGD"/>
</dbReference>
<dbReference type="GO" id="GO:0009410">
    <property type="term" value="P:response to xenobiotic stimulus"/>
    <property type="evidence" value="ECO:0000270"/>
    <property type="project" value="RGD"/>
</dbReference>
<dbReference type="GO" id="GO:1902287">
    <property type="term" value="P:semaphorin-plexin signaling pathway involved in axon guidance"/>
    <property type="evidence" value="ECO:0000266"/>
    <property type="project" value="RGD"/>
</dbReference>
<dbReference type="GO" id="GO:0010814">
    <property type="term" value="P:substance P catabolic process"/>
    <property type="evidence" value="ECO:0000266"/>
    <property type="project" value="RGD"/>
</dbReference>
<dbReference type="GO" id="GO:0097492">
    <property type="term" value="P:sympathetic neuron axon guidance"/>
    <property type="evidence" value="ECO:0000266"/>
    <property type="project" value="RGD"/>
</dbReference>
<dbReference type="CDD" id="cd08662">
    <property type="entry name" value="M13"/>
    <property type="match status" value="1"/>
</dbReference>
<dbReference type="FunFam" id="3.40.390.10:FF:000003">
    <property type="entry name" value="endothelin-converting enzyme 1 isoform X1"/>
    <property type="match status" value="1"/>
</dbReference>
<dbReference type="Gene3D" id="3.40.390.10">
    <property type="entry name" value="Collagenase (Catalytic Domain)"/>
    <property type="match status" value="1"/>
</dbReference>
<dbReference type="Gene3D" id="1.10.1380.10">
    <property type="entry name" value="Neutral endopeptidase , domain2"/>
    <property type="match status" value="1"/>
</dbReference>
<dbReference type="InterPro" id="IPR024079">
    <property type="entry name" value="MetalloPept_cat_dom_sf"/>
</dbReference>
<dbReference type="InterPro" id="IPR000718">
    <property type="entry name" value="Peptidase_M13"/>
</dbReference>
<dbReference type="InterPro" id="IPR018497">
    <property type="entry name" value="Peptidase_M13_C"/>
</dbReference>
<dbReference type="InterPro" id="IPR042089">
    <property type="entry name" value="Peptidase_M13_dom_2"/>
</dbReference>
<dbReference type="InterPro" id="IPR008753">
    <property type="entry name" value="Peptidase_M13_N"/>
</dbReference>
<dbReference type="PANTHER" id="PTHR11733:SF130">
    <property type="entry name" value="ENDOTHELIN-CONVERTING ENZYME 1"/>
    <property type="match status" value="1"/>
</dbReference>
<dbReference type="PANTHER" id="PTHR11733">
    <property type="entry name" value="ZINC METALLOPROTEASE FAMILY M13 NEPRILYSIN-RELATED"/>
    <property type="match status" value="1"/>
</dbReference>
<dbReference type="Pfam" id="PF01431">
    <property type="entry name" value="Peptidase_M13"/>
    <property type="match status" value="1"/>
</dbReference>
<dbReference type="Pfam" id="PF05649">
    <property type="entry name" value="Peptidase_M13_N"/>
    <property type="match status" value="1"/>
</dbReference>
<dbReference type="PRINTS" id="PR00786">
    <property type="entry name" value="NEPRILYSIN"/>
</dbReference>
<dbReference type="SUPFAM" id="SSF55486">
    <property type="entry name" value="Metalloproteases ('zincins'), catalytic domain"/>
    <property type="match status" value="1"/>
</dbReference>
<dbReference type="PROSITE" id="PS51885">
    <property type="entry name" value="NEPRILYSIN"/>
    <property type="match status" value="1"/>
</dbReference>
<dbReference type="PROSITE" id="PS00142">
    <property type="entry name" value="ZINC_PROTEASE"/>
    <property type="match status" value="1"/>
</dbReference>
<name>ECE1_RAT</name>
<keyword id="KW-0025">Alternative splicing</keyword>
<keyword id="KW-1003">Cell membrane</keyword>
<keyword id="KW-1015">Disulfide bond</keyword>
<keyword id="KW-0325">Glycoprotein</keyword>
<keyword id="KW-0378">Hydrolase</keyword>
<keyword id="KW-0472">Membrane</keyword>
<keyword id="KW-0479">Metal-binding</keyword>
<keyword id="KW-0482">Metalloprotease</keyword>
<keyword id="KW-0645">Protease</keyword>
<keyword id="KW-1185">Reference proteome</keyword>
<keyword id="KW-0735">Signal-anchor</keyword>
<keyword id="KW-0812">Transmembrane</keyword>
<keyword id="KW-1133">Transmembrane helix</keyword>
<keyword id="KW-0862">Zinc</keyword>